<sequence length="291" mass="30694">MSSPRERRPASQAPRLSRRPPAHQTSRSSPDTTAPTGSGLSNRFVNDNGIVTDTTASGTNCPPPPRAAARRASSPGESPQLVIFDLDGTLTDSARGIVSSFRHALNHIGAPVPEGDLATHIVGPPMHETLRAMGLGESAEEAIVAYRADYSARGWAMNSLFDGIGPLLADLRTAGVRLAVATSKAEPTARRILRHFGIEQHFEVIAGASTDGSRGSKVDVLAHALAQLRPLPERLVMVGDRSHDVDGAAAHGIDTVVVGWGYGRADFIDKTSTTVVTHAATIDELREALGV</sequence>
<keyword id="KW-0067">ATP-binding</keyword>
<keyword id="KW-0418">Kinase</keyword>
<keyword id="KW-0547">Nucleotide-binding</keyword>
<keyword id="KW-0597">Phosphoprotein</keyword>
<keyword id="KW-1185">Reference proteome</keyword>
<keyword id="KW-0808">Transferase</keyword>
<keyword id="KW-0829">Tyrosine-protein kinase</keyword>
<keyword id="KW-0843">Virulence</keyword>
<feature type="chain" id="PRO_0000426944" description="Tyrosine-protein kinase PtkA">
    <location>
        <begin position="1"/>
        <end position="291"/>
    </location>
</feature>
<feature type="region of interest" description="Disordered" evidence="2">
    <location>
        <begin position="1"/>
        <end position="79"/>
    </location>
</feature>
<feature type="compositionally biased region" description="Polar residues" evidence="2">
    <location>
        <begin position="23"/>
        <end position="60"/>
    </location>
</feature>
<feature type="modified residue" description="Phosphotyrosine" evidence="1">
    <location>
        <position position="262"/>
    </location>
</feature>
<accession>P9WPI8</accession>
<accession>L0TBP3</accession>
<accession>P68911</accession>
<accession>Q10515</accession>
<accession>Q10516</accession>
<organism>
    <name type="scientific">Mycobacterium tuberculosis (strain CDC 1551 / Oshkosh)</name>
    <dbReference type="NCBI Taxonomy" id="83331"/>
    <lineage>
        <taxon>Bacteria</taxon>
        <taxon>Bacillati</taxon>
        <taxon>Actinomycetota</taxon>
        <taxon>Actinomycetes</taxon>
        <taxon>Mycobacteriales</taxon>
        <taxon>Mycobacteriaceae</taxon>
        <taxon>Mycobacterium</taxon>
        <taxon>Mycobacterium tuberculosis complex</taxon>
    </lineage>
</organism>
<comment type="function">
    <text evidence="1">Required for growth within macrophages. Catalyzes the phosphorylation of PtpA on the tyrosine residues at positions 128 and 129, thereby increasing PtpA phosphatase activity and promoting pathogenicity.</text>
</comment>
<comment type="catalytic activity">
    <reaction evidence="1">
        <text>L-tyrosyl-[protein] + ATP = O-phospho-L-tyrosyl-[protein] + ADP + H(+)</text>
        <dbReference type="Rhea" id="RHEA:10596"/>
        <dbReference type="Rhea" id="RHEA-COMP:10136"/>
        <dbReference type="Rhea" id="RHEA-COMP:20101"/>
        <dbReference type="ChEBI" id="CHEBI:15378"/>
        <dbReference type="ChEBI" id="CHEBI:30616"/>
        <dbReference type="ChEBI" id="CHEBI:46858"/>
        <dbReference type="ChEBI" id="CHEBI:61978"/>
        <dbReference type="ChEBI" id="CHEBI:456216"/>
    </reaction>
    <physiologicalReaction direction="left-to-right" evidence="1">
        <dbReference type="Rhea" id="RHEA:10597"/>
    </physiologicalReaction>
</comment>
<comment type="subunit">
    <text evidence="1">Interacts with PtpA.</text>
</comment>
<comment type="PTM">
    <text evidence="1">Autophosphorylated.</text>
</comment>
<comment type="similarity">
    <text evidence="3">Belongs to the HAD-like hydrolase superfamily. CbbY/CbbZ/Gph/YieH family.</text>
</comment>
<reference key="1">
    <citation type="journal article" date="2002" name="J. Bacteriol.">
        <title>Whole-genome comparison of Mycobacterium tuberculosis clinical and laboratory strains.</title>
        <authorList>
            <person name="Fleischmann R.D."/>
            <person name="Alland D."/>
            <person name="Eisen J.A."/>
            <person name="Carpenter L."/>
            <person name="White O."/>
            <person name="Peterson J.D."/>
            <person name="DeBoy R.T."/>
            <person name="Dodson R.J."/>
            <person name="Gwinn M.L."/>
            <person name="Haft D.H."/>
            <person name="Hickey E.K."/>
            <person name="Kolonay J.F."/>
            <person name="Nelson W.C."/>
            <person name="Umayam L.A."/>
            <person name="Ermolaeva M.D."/>
            <person name="Salzberg S.L."/>
            <person name="Delcher A."/>
            <person name="Utterback T.R."/>
            <person name="Weidman J.F."/>
            <person name="Khouri H.M."/>
            <person name="Gill J."/>
            <person name="Mikula A."/>
            <person name="Bishai W."/>
            <person name="Jacobs W.R. Jr."/>
            <person name="Venter J.C."/>
            <person name="Fraser C.M."/>
        </authorList>
    </citation>
    <scope>NUCLEOTIDE SEQUENCE [LARGE SCALE GENOMIC DNA]</scope>
    <source>
        <strain>CDC 1551 / Oshkosh</strain>
    </source>
</reference>
<name>PTKA_MYCTO</name>
<proteinExistence type="inferred from homology"/>
<gene>
    <name evidence="1" type="primary">ptkA</name>
    <name type="ordered locus">MT2292</name>
</gene>
<evidence type="ECO:0000250" key="1">
    <source>
        <dbReference type="UniProtKB" id="P9WPI9"/>
    </source>
</evidence>
<evidence type="ECO:0000256" key="2">
    <source>
        <dbReference type="SAM" id="MobiDB-lite"/>
    </source>
</evidence>
<evidence type="ECO:0000305" key="3"/>
<dbReference type="EC" id="2.7.10.-" evidence="1"/>
<dbReference type="EMBL" id="AE000516">
    <property type="protein sequence ID" value="AAK46576.1"/>
    <property type="molecule type" value="Genomic_DNA"/>
</dbReference>
<dbReference type="PIR" id="D70777">
    <property type="entry name" value="D70777"/>
</dbReference>
<dbReference type="SMR" id="P9WPI8"/>
<dbReference type="KEGG" id="mtc:MT2292"/>
<dbReference type="PATRIC" id="fig|83331.31.peg.2469"/>
<dbReference type="HOGENOM" id="CLU_045011_19_4_11"/>
<dbReference type="Proteomes" id="UP000001020">
    <property type="component" value="Chromosome"/>
</dbReference>
<dbReference type="GO" id="GO:0005829">
    <property type="term" value="C:cytosol"/>
    <property type="evidence" value="ECO:0007669"/>
    <property type="project" value="TreeGrafter"/>
</dbReference>
<dbReference type="GO" id="GO:0005524">
    <property type="term" value="F:ATP binding"/>
    <property type="evidence" value="ECO:0007669"/>
    <property type="project" value="UniProtKB-KW"/>
</dbReference>
<dbReference type="GO" id="GO:0004713">
    <property type="term" value="F:protein tyrosine kinase activity"/>
    <property type="evidence" value="ECO:0007669"/>
    <property type="project" value="UniProtKB-KW"/>
</dbReference>
<dbReference type="CDD" id="cd04302">
    <property type="entry name" value="HAD_5NT"/>
    <property type="match status" value="1"/>
</dbReference>
<dbReference type="FunFam" id="3.40.50.1000:FF:000022">
    <property type="entry name" value="Phosphoglycolate phosphatase"/>
    <property type="match status" value="1"/>
</dbReference>
<dbReference type="Gene3D" id="3.40.50.1000">
    <property type="entry name" value="HAD superfamily/HAD-like"/>
    <property type="match status" value="1"/>
</dbReference>
<dbReference type="Gene3D" id="1.10.150.240">
    <property type="entry name" value="Putative phosphatase, domain 2"/>
    <property type="match status" value="1"/>
</dbReference>
<dbReference type="InterPro" id="IPR050155">
    <property type="entry name" value="HAD-like_hydrolase_sf"/>
</dbReference>
<dbReference type="InterPro" id="IPR036412">
    <property type="entry name" value="HAD-like_sf"/>
</dbReference>
<dbReference type="InterPro" id="IPR041492">
    <property type="entry name" value="HAD_2"/>
</dbReference>
<dbReference type="InterPro" id="IPR023214">
    <property type="entry name" value="HAD_sf"/>
</dbReference>
<dbReference type="InterPro" id="IPR023198">
    <property type="entry name" value="PGP-like_dom2"/>
</dbReference>
<dbReference type="PANTHER" id="PTHR43434:SF20">
    <property type="entry name" value="5'-NUCLEOTIDASE"/>
    <property type="match status" value="1"/>
</dbReference>
<dbReference type="PANTHER" id="PTHR43434">
    <property type="entry name" value="PHOSPHOGLYCOLATE PHOSPHATASE"/>
    <property type="match status" value="1"/>
</dbReference>
<dbReference type="Pfam" id="PF13419">
    <property type="entry name" value="HAD_2"/>
    <property type="match status" value="1"/>
</dbReference>
<dbReference type="SFLD" id="SFLDG01129">
    <property type="entry name" value="C1.5:_HAD__Beta-PGM__Phosphata"/>
    <property type="match status" value="1"/>
</dbReference>
<dbReference type="SFLD" id="SFLDS00003">
    <property type="entry name" value="Haloacid_Dehalogenase"/>
    <property type="match status" value="1"/>
</dbReference>
<dbReference type="SUPFAM" id="SSF56784">
    <property type="entry name" value="HAD-like"/>
    <property type="match status" value="1"/>
</dbReference>
<protein>
    <recommendedName>
        <fullName evidence="1">Tyrosine-protein kinase PtkA</fullName>
        <ecNumber evidence="1">2.7.10.-</ecNumber>
    </recommendedName>
    <alternativeName>
        <fullName evidence="1">Protein tyrosine kinase A</fullName>
    </alternativeName>
</protein>